<name>RR14_PIPCE</name>
<feature type="chain" id="PRO_0000276697" description="Small ribosomal subunit protein uS14c">
    <location>
        <begin position="1"/>
        <end position="100"/>
    </location>
</feature>
<feature type="region of interest" description="Disordered" evidence="2">
    <location>
        <begin position="1"/>
        <end position="54"/>
    </location>
</feature>
<geneLocation type="chloroplast"/>
<evidence type="ECO:0000255" key="1">
    <source>
        <dbReference type="HAMAP-Rule" id="MF_00537"/>
    </source>
</evidence>
<evidence type="ECO:0000256" key="2">
    <source>
        <dbReference type="SAM" id="MobiDB-lite"/>
    </source>
</evidence>
<evidence type="ECO:0000305" key="3"/>
<sequence length="100" mass="11733">MARKSLIQRERKRQKLEQKFHSIRRSSKKEISKVSSLSGKWEIHGKLQSPPRNSAPIRLHRRCFLTGRPRGNYRDFGLSGHILRERFHACLLPGATRSSW</sequence>
<accession>Q06GR2</accession>
<organism>
    <name type="scientific">Piper cenocladum</name>
    <name type="common">Ant piper</name>
    <dbReference type="NCBI Taxonomy" id="398741"/>
    <lineage>
        <taxon>Eukaryota</taxon>
        <taxon>Viridiplantae</taxon>
        <taxon>Streptophyta</taxon>
        <taxon>Embryophyta</taxon>
        <taxon>Tracheophyta</taxon>
        <taxon>Spermatophyta</taxon>
        <taxon>Magnoliopsida</taxon>
        <taxon>Magnoliidae</taxon>
        <taxon>Piperales</taxon>
        <taxon>Piperaceae</taxon>
        <taxon>Piper</taxon>
    </lineage>
</organism>
<gene>
    <name evidence="1" type="primary">rps14</name>
</gene>
<comment type="function">
    <text evidence="1">Binds 16S rRNA, required for the assembly of 30S particles.</text>
</comment>
<comment type="subunit">
    <text evidence="1">Part of the 30S ribosomal subunit.</text>
</comment>
<comment type="subcellular location">
    <subcellularLocation>
        <location>Plastid</location>
        <location>Chloroplast</location>
    </subcellularLocation>
</comment>
<comment type="similarity">
    <text evidence="1">Belongs to the universal ribosomal protein uS14 family.</text>
</comment>
<reference key="1">
    <citation type="journal article" date="2006" name="BMC Evol. Biol.">
        <title>Complete plastid genome sequences of Drimys, Liriodendron, and Piper: implications for the phylogenetic relationships of magnoliids.</title>
        <authorList>
            <person name="Cai Z."/>
            <person name="Penaflor C."/>
            <person name="Kuehl J.V."/>
            <person name="Leebens-Mack J."/>
            <person name="Carlson J.E."/>
            <person name="dePamphilis C.W."/>
            <person name="Boore J.L."/>
            <person name="Jansen R.K."/>
        </authorList>
    </citation>
    <scope>NUCLEOTIDE SEQUENCE [LARGE SCALE GENOMIC DNA]</scope>
</reference>
<keyword id="KW-0150">Chloroplast</keyword>
<keyword id="KW-0934">Plastid</keyword>
<keyword id="KW-0687">Ribonucleoprotein</keyword>
<keyword id="KW-0689">Ribosomal protein</keyword>
<keyword id="KW-0694">RNA-binding</keyword>
<keyword id="KW-0699">rRNA-binding</keyword>
<dbReference type="EMBL" id="DQ887677">
    <property type="protein sequence ID" value="ABI14470.1"/>
    <property type="molecule type" value="Genomic_DNA"/>
</dbReference>
<dbReference type="RefSeq" id="YP_784471.1">
    <property type="nucleotide sequence ID" value="NC_008457.1"/>
</dbReference>
<dbReference type="SMR" id="Q06GR2"/>
<dbReference type="GeneID" id="4363734"/>
<dbReference type="GO" id="GO:0009507">
    <property type="term" value="C:chloroplast"/>
    <property type="evidence" value="ECO:0007669"/>
    <property type="project" value="UniProtKB-SubCell"/>
</dbReference>
<dbReference type="GO" id="GO:0015935">
    <property type="term" value="C:small ribosomal subunit"/>
    <property type="evidence" value="ECO:0007669"/>
    <property type="project" value="TreeGrafter"/>
</dbReference>
<dbReference type="GO" id="GO:0019843">
    <property type="term" value="F:rRNA binding"/>
    <property type="evidence" value="ECO:0007669"/>
    <property type="project" value="UniProtKB-UniRule"/>
</dbReference>
<dbReference type="GO" id="GO:0003735">
    <property type="term" value="F:structural constituent of ribosome"/>
    <property type="evidence" value="ECO:0007669"/>
    <property type="project" value="InterPro"/>
</dbReference>
<dbReference type="GO" id="GO:0006412">
    <property type="term" value="P:translation"/>
    <property type="evidence" value="ECO:0007669"/>
    <property type="project" value="UniProtKB-UniRule"/>
</dbReference>
<dbReference type="FunFam" id="1.10.287.1480:FF:000001">
    <property type="entry name" value="30S ribosomal protein S14"/>
    <property type="match status" value="1"/>
</dbReference>
<dbReference type="Gene3D" id="1.10.287.1480">
    <property type="match status" value="1"/>
</dbReference>
<dbReference type="HAMAP" id="MF_00537">
    <property type="entry name" value="Ribosomal_uS14_1"/>
    <property type="match status" value="1"/>
</dbReference>
<dbReference type="InterPro" id="IPR001209">
    <property type="entry name" value="Ribosomal_uS14"/>
</dbReference>
<dbReference type="InterPro" id="IPR023036">
    <property type="entry name" value="Ribosomal_uS14_bac/plastid"/>
</dbReference>
<dbReference type="InterPro" id="IPR018271">
    <property type="entry name" value="Ribosomal_uS14_CS"/>
</dbReference>
<dbReference type="NCBIfam" id="NF006477">
    <property type="entry name" value="PRK08881.1"/>
    <property type="match status" value="1"/>
</dbReference>
<dbReference type="PANTHER" id="PTHR19836">
    <property type="entry name" value="30S RIBOSOMAL PROTEIN S14"/>
    <property type="match status" value="1"/>
</dbReference>
<dbReference type="PANTHER" id="PTHR19836:SF19">
    <property type="entry name" value="SMALL RIBOSOMAL SUBUNIT PROTEIN US14M"/>
    <property type="match status" value="1"/>
</dbReference>
<dbReference type="Pfam" id="PF00253">
    <property type="entry name" value="Ribosomal_S14"/>
    <property type="match status" value="1"/>
</dbReference>
<dbReference type="SUPFAM" id="SSF57716">
    <property type="entry name" value="Glucocorticoid receptor-like (DNA-binding domain)"/>
    <property type="match status" value="1"/>
</dbReference>
<dbReference type="PROSITE" id="PS00527">
    <property type="entry name" value="RIBOSOMAL_S14"/>
    <property type="match status" value="1"/>
</dbReference>
<proteinExistence type="inferred from homology"/>
<protein>
    <recommendedName>
        <fullName evidence="1">Small ribosomal subunit protein uS14c</fullName>
    </recommendedName>
    <alternativeName>
        <fullName evidence="3">30S ribosomal protein S14, chloroplastic</fullName>
    </alternativeName>
</protein>